<reference key="1">
    <citation type="journal article" date="2000" name="Nature">
        <title>Sequence and analysis of chromosome 1 of the plant Arabidopsis thaliana.</title>
        <authorList>
            <person name="Theologis A."/>
            <person name="Ecker J.R."/>
            <person name="Palm C.J."/>
            <person name="Federspiel N.A."/>
            <person name="Kaul S."/>
            <person name="White O."/>
            <person name="Alonso J."/>
            <person name="Altafi H."/>
            <person name="Araujo R."/>
            <person name="Bowman C.L."/>
            <person name="Brooks S.Y."/>
            <person name="Buehler E."/>
            <person name="Chan A."/>
            <person name="Chao Q."/>
            <person name="Chen H."/>
            <person name="Cheuk R.F."/>
            <person name="Chin C.W."/>
            <person name="Chung M.K."/>
            <person name="Conn L."/>
            <person name="Conway A.B."/>
            <person name="Conway A.R."/>
            <person name="Creasy T.H."/>
            <person name="Dewar K."/>
            <person name="Dunn P."/>
            <person name="Etgu P."/>
            <person name="Feldblyum T.V."/>
            <person name="Feng J.-D."/>
            <person name="Fong B."/>
            <person name="Fujii C.Y."/>
            <person name="Gill J.E."/>
            <person name="Goldsmith A.D."/>
            <person name="Haas B."/>
            <person name="Hansen N.F."/>
            <person name="Hughes B."/>
            <person name="Huizar L."/>
            <person name="Hunter J.L."/>
            <person name="Jenkins J."/>
            <person name="Johnson-Hopson C."/>
            <person name="Khan S."/>
            <person name="Khaykin E."/>
            <person name="Kim C.J."/>
            <person name="Koo H.L."/>
            <person name="Kremenetskaia I."/>
            <person name="Kurtz D.B."/>
            <person name="Kwan A."/>
            <person name="Lam B."/>
            <person name="Langin-Hooper S."/>
            <person name="Lee A."/>
            <person name="Lee J.M."/>
            <person name="Lenz C.A."/>
            <person name="Li J.H."/>
            <person name="Li Y.-P."/>
            <person name="Lin X."/>
            <person name="Liu S.X."/>
            <person name="Liu Z.A."/>
            <person name="Luros J.S."/>
            <person name="Maiti R."/>
            <person name="Marziali A."/>
            <person name="Militscher J."/>
            <person name="Miranda M."/>
            <person name="Nguyen M."/>
            <person name="Nierman W.C."/>
            <person name="Osborne B.I."/>
            <person name="Pai G."/>
            <person name="Peterson J."/>
            <person name="Pham P.K."/>
            <person name="Rizzo M."/>
            <person name="Rooney T."/>
            <person name="Rowley D."/>
            <person name="Sakano H."/>
            <person name="Salzberg S.L."/>
            <person name="Schwartz J.R."/>
            <person name="Shinn P."/>
            <person name="Southwick A.M."/>
            <person name="Sun H."/>
            <person name="Tallon L.J."/>
            <person name="Tambunga G."/>
            <person name="Toriumi M.J."/>
            <person name="Town C.D."/>
            <person name="Utterback T."/>
            <person name="Van Aken S."/>
            <person name="Vaysberg M."/>
            <person name="Vysotskaia V.S."/>
            <person name="Walker M."/>
            <person name="Wu D."/>
            <person name="Yu G."/>
            <person name="Fraser C.M."/>
            <person name="Venter J.C."/>
            <person name="Davis R.W."/>
        </authorList>
    </citation>
    <scope>NUCLEOTIDE SEQUENCE [LARGE SCALE GENOMIC DNA]</scope>
    <source>
        <strain>cv. Columbia</strain>
    </source>
</reference>
<reference key="2">
    <citation type="journal article" date="2017" name="Plant J.">
        <title>Araport11: a complete reannotation of the Arabidopsis thaliana reference genome.</title>
        <authorList>
            <person name="Cheng C.Y."/>
            <person name="Krishnakumar V."/>
            <person name="Chan A.P."/>
            <person name="Thibaud-Nissen F."/>
            <person name="Schobel S."/>
            <person name="Town C.D."/>
        </authorList>
    </citation>
    <scope>GENOME REANNOTATION</scope>
    <source>
        <strain>cv. Columbia</strain>
    </source>
</reference>
<reference key="3">
    <citation type="journal article" date="2004" name="Plant Cell">
        <title>Genome-wide analysis of Arabidopsis pentatricopeptide repeat proteins reveals their essential role in organelle biogenesis.</title>
        <authorList>
            <person name="Lurin C."/>
            <person name="Andres C."/>
            <person name="Aubourg S."/>
            <person name="Bellaoui M."/>
            <person name="Bitton F."/>
            <person name="Bruyere C."/>
            <person name="Caboche M."/>
            <person name="Debast C."/>
            <person name="Gualberto J."/>
            <person name="Hoffmann B."/>
            <person name="Lecharny A."/>
            <person name="Le Ret M."/>
            <person name="Martin-Magniette M.-L."/>
            <person name="Mireau H."/>
            <person name="Peeters N."/>
            <person name="Renou J.-P."/>
            <person name="Szurek B."/>
            <person name="Taconnat L."/>
            <person name="Small I."/>
        </authorList>
    </citation>
    <scope>GENE FAMILY</scope>
</reference>
<sequence length="895" mass="98652">MNCLANESLNSLKISPFSTSRLLSSVTNFRNQLSFSSKDSSSSSAPFNPFRFFNDQSNSRLCNLRTTKILQAHLLRRYLLPFDVFLTKSLLSWYSNSGSMADAAKLFDTIPQPDVVSCNIMISGYKQHRLFEESLRFFSKMHFLGFEANEISYGSVISACSALQAPLFSELVCCHTIKMGYFFYEVVESALIDVFSKNLRFEDAYKVFRDSLSANVYCWNTIIAGALRNQNYGAVFDLFHEMCVGFQKPDSYTYSSVLAACASLEKLRFGKVVQARVIKCGAEDVFVCTAIVDLYAKCGHMAEAMEVFSRIPNPSVVSWTVMLSGYTKSNDAFSALEIFKEMRHSGVEINNCTVTSVISACGRPSMVCEASQVHAWVFKSGFYLDSSVAAALISMYSKSGDIDLSEQVFEDLDDIQRQNIVNVMITSFSQSKKPGKAIRLFTRMLQEGLRTDEFSVCSLLSVLDCLNLGKQVHGYTLKSGLVLDLTVGSSLFTLYSKCGSLEESYKLFQGIPFKDNACWASMISGFNEYGYLREAIGLFSEMLDDGTSPDESTLAAVLTVCSSHPSLPRGKEIHGYTLRAGIDKGMDLGSALVNMYSKCGSLKLARQVYDRLPELDPVSCSSLISGYSQHGLIQDGFLLFRDMVMSGFTMDSFAISSILKAAALSDESSLGAQVHAYITKIGLCTEPSVGSSLLTMYSKFGSIDDCCKAFSQINGPDLIAWTALIASYAQHGKANEALQVYNLMKEKGFKPDKVTFVGVLSACSHGGLVEESYFHLNSMVKDYGIEPENRHYVCMVDALGRSGRLREAESFINNMHIKPDALVWGTLLAACKIHGEVELGKVAAKKAIELEPSDAGAYISLSNILAEVGEWDEVEETRKLMKGTGVQKEPGWSSV</sequence>
<name>PP121_ARATH</name>
<keyword id="KW-0150">Chloroplast</keyword>
<keyword id="KW-0934">Plastid</keyword>
<keyword id="KW-1185">Reference proteome</keyword>
<keyword id="KW-0677">Repeat</keyword>
<keyword id="KW-0809">Transit peptide</keyword>
<dbReference type="EMBL" id="AC011765">
    <property type="protein sequence ID" value="AAG52351.1"/>
    <property type="molecule type" value="Genomic_DNA"/>
</dbReference>
<dbReference type="EMBL" id="CP002684">
    <property type="protein sequence ID" value="AEE35614.1"/>
    <property type="molecule type" value="Genomic_DNA"/>
</dbReference>
<dbReference type="PIR" id="B96775">
    <property type="entry name" value="B96775"/>
</dbReference>
<dbReference type="RefSeq" id="NP_177599.1">
    <property type="nucleotide sequence ID" value="NM_106119.2"/>
</dbReference>
<dbReference type="SMR" id="Q9CA56"/>
<dbReference type="FunCoup" id="Q9CA56">
    <property type="interactions" value="350"/>
</dbReference>
<dbReference type="STRING" id="3702.Q9CA56"/>
<dbReference type="iPTMnet" id="Q9CA56"/>
<dbReference type="PaxDb" id="3702-AT1G74600.1"/>
<dbReference type="ProteomicsDB" id="249402"/>
<dbReference type="EnsemblPlants" id="AT1G74600.1">
    <property type="protein sequence ID" value="AT1G74600.1"/>
    <property type="gene ID" value="AT1G74600"/>
</dbReference>
<dbReference type="GeneID" id="843800"/>
<dbReference type="Gramene" id="AT1G74600.1">
    <property type="protein sequence ID" value="AT1G74600.1"/>
    <property type="gene ID" value="AT1G74600"/>
</dbReference>
<dbReference type="KEGG" id="ath:AT1G74600"/>
<dbReference type="Araport" id="AT1G74600"/>
<dbReference type="TAIR" id="AT1G74600">
    <property type="gene designation" value="OTP87"/>
</dbReference>
<dbReference type="eggNOG" id="KOG4197">
    <property type="taxonomic scope" value="Eukaryota"/>
</dbReference>
<dbReference type="HOGENOM" id="CLU_002706_15_6_1"/>
<dbReference type="InParanoid" id="Q9CA56"/>
<dbReference type="OMA" id="AWTTIID"/>
<dbReference type="PhylomeDB" id="Q9CA56"/>
<dbReference type="PRO" id="PR:Q9CA56"/>
<dbReference type="Proteomes" id="UP000006548">
    <property type="component" value="Chromosome 1"/>
</dbReference>
<dbReference type="ExpressionAtlas" id="Q9CA56">
    <property type="expression patterns" value="baseline and differential"/>
</dbReference>
<dbReference type="GO" id="GO:0009507">
    <property type="term" value="C:chloroplast"/>
    <property type="evidence" value="ECO:0000314"/>
    <property type="project" value="TAIR"/>
</dbReference>
<dbReference type="GO" id="GO:0005739">
    <property type="term" value="C:mitochondrion"/>
    <property type="evidence" value="ECO:0000314"/>
    <property type="project" value="TAIR"/>
</dbReference>
<dbReference type="GO" id="GO:0003723">
    <property type="term" value="F:RNA binding"/>
    <property type="evidence" value="ECO:0007669"/>
    <property type="project" value="InterPro"/>
</dbReference>
<dbReference type="GO" id="GO:0080156">
    <property type="term" value="P:mitochondrial mRNA modification"/>
    <property type="evidence" value="ECO:0000315"/>
    <property type="project" value="TAIR"/>
</dbReference>
<dbReference type="FunFam" id="1.25.40.10:FF:002532">
    <property type="entry name" value="Pentatricopeptide repeat-containing protein At1g74600, chloroplastic"/>
    <property type="match status" value="1"/>
</dbReference>
<dbReference type="FunFam" id="1.25.40.10:FF:000288">
    <property type="entry name" value="Pentatricopeptide repeat-containing protein At4g02750"/>
    <property type="match status" value="1"/>
</dbReference>
<dbReference type="FunFam" id="1.25.40.10:FF:001223">
    <property type="entry name" value="Pentatricopeptide repeat-containing protein chloroplastic"/>
    <property type="match status" value="1"/>
</dbReference>
<dbReference type="FunFam" id="1.25.40.10:FF:000285">
    <property type="entry name" value="Pentatricopeptide repeat-containing protein, chloroplastic"/>
    <property type="match status" value="1"/>
</dbReference>
<dbReference type="FunFam" id="1.25.40.10:FF:000205">
    <property type="entry name" value="Pentatricopeptide repeat-containing protein, mitochondrial"/>
    <property type="match status" value="1"/>
</dbReference>
<dbReference type="Gene3D" id="1.25.40.10">
    <property type="entry name" value="Tetratricopeptide repeat domain"/>
    <property type="match status" value="7"/>
</dbReference>
<dbReference type="InterPro" id="IPR046848">
    <property type="entry name" value="E_motif"/>
</dbReference>
<dbReference type="InterPro" id="IPR002885">
    <property type="entry name" value="Pentatricopeptide_rpt"/>
</dbReference>
<dbReference type="InterPro" id="IPR046960">
    <property type="entry name" value="PPR_At4g14850-like_plant"/>
</dbReference>
<dbReference type="InterPro" id="IPR011990">
    <property type="entry name" value="TPR-like_helical_dom_sf"/>
</dbReference>
<dbReference type="NCBIfam" id="TIGR00756">
    <property type="entry name" value="PPR"/>
    <property type="match status" value="7"/>
</dbReference>
<dbReference type="PANTHER" id="PTHR47926">
    <property type="entry name" value="PENTATRICOPEPTIDE REPEAT-CONTAINING PROTEIN"/>
    <property type="match status" value="1"/>
</dbReference>
<dbReference type="PANTHER" id="PTHR47926:SF477">
    <property type="entry name" value="PENTATRICOPEPTIDE REPEAT-CONTAINING PROTEIN"/>
    <property type="match status" value="1"/>
</dbReference>
<dbReference type="Pfam" id="PF20431">
    <property type="entry name" value="E_motif"/>
    <property type="match status" value="1"/>
</dbReference>
<dbReference type="Pfam" id="PF01535">
    <property type="entry name" value="PPR"/>
    <property type="match status" value="7"/>
</dbReference>
<dbReference type="Pfam" id="PF13041">
    <property type="entry name" value="PPR_2"/>
    <property type="match status" value="4"/>
</dbReference>
<dbReference type="SUPFAM" id="SSF48452">
    <property type="entry name" value="TPR-like"/>
    <property type="match status" value="1"/>
</dbReference>
<dbReference type="PROSITE" id="PS51375">
    <property type="entry name" value="PPR"/>
    <property type="match status" value="19"/>
</dbReference>
<protein>
    <recommendedName>
        <fullName>Pentatricopeptide repeat-containing protein At1g74600, chloroplastic</fullName>
    </recommendedName>
</protein>
<evidence type="ECO:0000255" key="1"/>
<evidence type="ECO:0000305" key="2"/>
<organism>
    <name type="scientific">Arabidopsis thaliana</name>
    <name type="common">Mouse-ear cress</name>
    <dbReference type="NCBI Taxonomy" id="3702"/>
    <lineage>
        <taxon>Eukaryota</taxon>
        <taxon>Viridiplantae</taxon>
        <taxon>Streptophyta</taxon>
        <taxon>Embryophyta</taxon>
        <taxon>Tracheophyta</taxon>
        <taxon>Spermatophyta</taxon>
        <taxon>Magnoliopsida</taxon>
        <taxon>eudicotyledons</taxon>
        <taxon>Gunneridae</taxon>
        <taxon>Pentapetalae</taxon>
        <taxon>rosids</taxon>
        <taxon>malvids</taxon>
        <taxon>Brassicales</taxon>
        <taxon>Brassicaceae</taxon>
        <taxon>Camelineae</taxon>
        <taxon>Arabidopsis</taxon>
    </lineage>
</organism>
<feature type="transit peptide" description="Chloroplast" evidence="1">
    <location>
        <begin position="1"/>
        <end position="71"/>
    </location>
</feature>
<feature type="chain" id="PRO_0000342862" description="Pentatricopeptide repeat-containing protein At1g74600, chloroplastic">
    <location>
        <begin position="72"/>
        <end position="895"/>
    </location>
</feature>
<feature type="repeat" description="PPR 1">
    <location>
        <begin position="83"/>
        <end position="113"/>
    </location>
</feature>
<feature type="repeat" description="PPR 2">
    <location>
        <begin position="114"/>
        <end position="148"/>
    </location>
</feature>
<feature type="repeat" description="PPR 3">
    <location>
        <begin position="149"/>
        <end position="183"/>
    </location>
</feature>
<feature type="repeat" description="PPR 4">
    <location>
        <begin position="184"/>
        <end position="214"/>
    </location>
</feature>
<feature type="repeat" description="PPR 5">
    <location>
        <begin position="215"/>
        <end position="249"/>
    </location>
</feature>
<feature type="repeat" description="PPR 6">
    <location>
        <begin position="250"/>
        <end position="280"/>
    </location>
</feature>
<feature type="repeat" description="PPR 7">
    <location>
        <begin position="284"/>
        <end position="314"/>
    </location>
</feature>
<feature type="repeat" description="PPR 8">
    <location>
        <begin position="315"/>
        <end position="349"/>
    </location>
</feature>
<feature type="repeat" description="PPR 9">
    <location>
        <begin position="350"/>
        <end position="384"/>
    </location>
</feature>
<feature type="repeat" description="PPR 10">
    <location>
        <begin position="385"/>
        <end position="415"/>
    </location>
</feature>
<feature type="repeat" description="PPR 11">
    <location>
        <begin position="417"/>
        <end position="451"/>
    </location>
</feature>
<feature type="repeat" description="PPR 12">
    <location>
        <begin position="452"/>
        <end position="483"/>
    </location>
</feature>
<feature type="repeat" description="PPR 13">
    <location>
        <begin position="484"/>
        <end position="514"/>
    </location>
</feature>
<feature type="repeat" description="PPR 14">
    <location>
        <begin position="515"/>
        <end position="549"/>
    </location>
</feature>
<feature type="repeat" description="PPR 15">
    <location>
        <begin position="550"/>
        <end position="584"/>
    </location>
</feature>
<feature type="repeat" description="PPR 16">
    <location>
        <begin position="585"/>
        <end position="615"/>
    </location>
</feature>
<feature type="repeat" description="PPR 17">
    <location>
        <begin position="616"/>
        <end position="650"/>
    </location>
</feature>
<feature type="repeat" description="PPR 18">
    <location>
        <begin position="651"/>
        <end position="685"/>
    </location>
</feature>
<feature type="repeat" description="PPR 19">
    <location>
        <begin position="686"/>
        <end position="716"/>
    </location>
</feature>
<feature type="repeat" description="PPR 20">
    <location>
        <begin position="717"/>
        <end position="751"/>
    </location>
</feature>
<feature type="repeat" description="PPR 21">
    <location>
        <begin position="752"/>
        <end position="787"/>
    </location>
</feature>
<feature type="repeat" description="PPR 22">
    <location>
        <begin position="788"/>
        <end position="818"/>
    </location>
</feature>
<feature type="region of interest" description="Type E motif; degenerate">
    <location>
        <begin position="824"/>
        <end position="895"/>
    </location>
</feature>
<accession>Q9CA56</accession>
<gene>
    <name type="primary">PCMP-E69</name>
    <name type="ordered locus">At1g74600</name>
    <name type="ORF">F1M20.28</name>
</gene>
<comment type="subcellular location">
    <subcellularLocation>
        <location evidence="2">Plastid</location>
        <location evidence="2">Chloroplast</location>
    </subcellularLocation>
</comment>
<comment type="similarity">
    <text evidence="2">Belongs to the PPR family. PCMP-E subfamily.</text>
</comment>
<comment type="online information" name="Pentatricopeptide repeat proteins">
    <link uri="https://ppr.plantenergy.uwa.edu.au"/>
</comment>
<proteinExistence type="inferred from homology"/>